<gene>
    <name evidence="1" type="primary">nusB</name>
    <name type="ordered locus">VC0395_A1857</name>
    <name type="ordered locus">VC395_2383</name>
</gene>
<dbReference type="EMBL" id="CP000627">
    <property type="protein sequence ID" value="ABQ19650.1"/>
    <property type="molecule type" value="Genomic_DNA"/>
</dbReference>
<dbReference type="EMBL" id="CP001235">
    <property type="protein sequence ID" value="ACP10373.1"/>
    <property type="molecule type" value="Genomic_DNA"/>
</dbReference>
<dbReference type="RefSeq" id="WP_000501296.1">
    <property type="nucleotide sequence ID" value="NZ_JAACZH010000008.1"/>
</dbReference>
<dbReference type="SMR" id="A5F5Z6"/>
<dbReference type="GeneID" id="89513739"/>
<dbReference type="KEGG" id="vco:VC0395_A1857"/>
<dbReference type="KEGG" id="vcr:VC395_2383"/>
<dbReference type="PATRIC" id="fig|345073.21.peg.2297"/>
<dbReference type="eggNOG" id="COG0781">
    <property type="taxonomic scope" value="Bacteria"/>
</dbReference>
<dbReference type="HOGENOM" id="CLU_087843_4_1_6"/>
<dbReference type="OrthoDB" id="9789556at2"/>
<dbReference type="Proteomes" id="UP000000249">
    <property type="component" value="Chromosome 2"/>
</dbReference>
<dbReference type="GO" id="GO:0005829">
    <property type="term" value="C:cytosol"/>
    <property type="evidence" value="ECO:0007669"/>
    <property type="project" value="TreeGrafter"/>
</dbReference>
<dbReference type="GO" id="GO:0003723">
    <property type="term" value="F:RNA binding"/>
    <property type="evidence" value="ECO:0007669"/>
    <property type="project" value="UniProtKB-UniRule"/>
</dbReference>
<dbReference type="GO" id="GO:0006353">
    <property type="term" value="P:DNA-templated transcription termination"/>
    <property type="evidence" value="ECO:0007669"/>
    <property type="project" value="UniProtKB-UniRule"/>
</dbReference>
<dbReference type="GO" id="GO:0031564">
    <property type="term" value="P:transcription antitermination"/>
    <property type="evidence" value="ECO:0007669"/>
    <property type="project" value="UniProtKB-KW"/>
</dbReference>
<dbReference type="FunFam" id="1.10.940.10:FF:000001">
    <property type="entry name" value="Transcription antitermination factor NusB"/>
    <property type="match status" value="1"/>
</dbReference>
<dbReference type="Gene3D" id="1.10.940.10">
    <property type="entry name" value="NusB-like"/>
    <property type="match status" value="1"/>
</dbReference>
<dbReference type="HAMAP" id="MF_00073">
    <property type="entry name" value="NusB"/>
    <property type="match status" value="1"/>
</dbReference>
<dbReference type="InterPro" id="IPR035926">
    <property type="entry name" value="NusB-like_sf"/>
</dbReference>
<dbReference type="InterPro" id="IPR011605">
    <property type="entry name" value="NusB_fam"/>
</dbReference>
<dbReference type="InterPro" id="IPR006027">
    <property type="entry name" value="NusB_RsmB_TIM44"/>
</dbReference>
<dbReference type="NCBIfam" id="TIGR01951">
    <property type="entry name" value="nusB"/>
    <property type="match status" value="1"/>
</dbReference>
<dbReference type="PANTHER" id="PTHR11078:SF3">
    <property type="entry name" value="ANTITERMINATION NUSB DOMAIN-CONTAINING PROTEIN"/>
    <property type="match status" value="1"/>
</dbReference>
<dbReference type="PANTHER" id="PTHR11078">
    <property type="entry name" value="N UTILIZATION SUBSTANCE PROTEIN B-RELATED"/>
    <property type="match status" value="1"/>
</dbReference>
<dbReference type="Pfam" id="PF01029">
    <property type="entry name" value="NusB"/>
    <property type="match status" value="1"/>
</dbReference>
<dbReference type="SUPFAM" id="SSF48013">
    <property type="entry name" value="NusB-like"/>
    <property type="match status" value="1"/>
</dbReference>
<proteinExistence type="inferred from homology"/>
<name>NUSB_VIBC3</name>
<organism>
    <name type="scientific">Vibrio cholerae serotype O1 (strain ATCC 39541 / Classical Ogawa 395 / O395)</name>
    <dbReference type="NCBI Taxonomy" id="345073"/>
    <lineage>
        <taxon>Bacteria</taxon>
        <taxon>Pseudomonadati</taxon>
        <taxon>Pseudomonadota</taxon>
        <taxon>Gammaproteobacteria</taxon>
        <taxon>Vibrionales</taxon>
        <taxon>Vibrionaceae</taxon>
        <taxon>Vibrio</taxon>
    </lineage>
</organism>
<keyword id="KW-0694">RNA-binding</keyword>
<keyword id="KW-0804">Transcription</keyword>
<keyword id="KW-0889">Transcription antitermination</keyword>
<keyword id="KW-0805">Transcription regulation</keyword>
<sequence length="156" mass="17675">MGASVKPAARRNARQFALQAIYSWQITKENVATIEEQFLTSGKYDEEEHRAAEPALAAPETDVSYFRDLLAGVVLNHNELDSKLRPFVSRPMQDLDMMELALLRLAMYEMTRREDVPYKVVINEAIELAKVFAAEDSHKFVNGVLDKAAPHVRKKA</sequence>
<reference key="1">
    <citation type="submission" date="2007-03" db="EMBL/GenBank/DDBJ databases">
        <authorList>
            <person name="Heidelberg J."/>
        </authorList>
    </citation>
    <scope>NUCLEOTIDE SEQUENCE [LARGE SCALE GENOMIC DNA]</scope>
    <source>
        <strain>ATCC 39541 / Classical Ogawa 395 / O395</strain>
    </source>
</reference>
<reference key="2">
    <citation type="journal article" date="2008" name="PLoS ONE">
        <title>A recalibrated molecular clock and independent origins for the cholera pandemic clones.</title>
        <authorList>
            <person name="Feng L."/>
            <person name="Reeves P.R."/>
            <person name="Lan R."/>
            <person name="Ren Y."/>
            <person name="Gao C."/>
            <person name="Zhou Z."/>
            <person name="Ren Y."/>
            <person name="Cheng J."/>
            <person name="Wang W."/>
            <person name="Wang J."/>
            <person name="Qian W."/>
            <person name="Li D."/>
            <person name="Wang L."/>
        </authorList>
    </citation>
    <scope>NUCLEOTIDE SEQUENCE [LARGE SCALE GENOMIC DNA]</scope>
    <source>
        <strain>ATCC 39541 / Classical Ogawa 395 / O395</strain>
    </source>
</reference>
<comment type="function">
    <text evidence="1">Involved in transcription antitermination. Required for transcription of ribosomal RNA (rRNA) genes. Binds specifically to the boxA antiterminator sequence of the ribosomal RNA (rrn) operons.</text>
</comment>
<comment type="similarity">
    <text evidence="1">Belongs to the NusB family.</text>
</comment>
<accession>A5F5Z6</accession>
<accession>C3M3M4</accession>
<evidence type="ECO:0000255" key="1">
    <source>
        <dbReference type="HAMAP-Rule" id="MF_00073"/>
    </source>
</evidence>
<protein>
    <recommendedName>
        <fullName evidence="1">Transcription antitermination protein NusB</fullName>
    </recommendedName>
    <alternativeName>
        <fullName evidence="1">Antitermination factor NusB</fullName>
    </alternativeName>
</protein>
<feature type="chain" id="PRO_1000071194" description="Transcription antitermination protein NusB">
    <location>
        <begin position="1"/>
        <end position="156"/>
    </location>
</feature>